<organism>
    <name type="scientific">Escherichia coli O157:H7 (strain EC4115 / EHEC)</name>
    <dbReference type="NCBI Taxonomy" id="444450"/>
    <lineage>
        <taxon>Bacteria</taxon>
        <taxon>Pseudomonadati</taxon>
        <taxon>Pseudomonadota</taxon>
        <taxon>Gammaproteobacteria</taxon>
        <taxon>Enterobacterales</taxon>
        <taxon>Enterobacteriaceae</taxon>
        <taxon>Escherichia</taxon>
    </lineage>
</organism>
<sequence length="560" mass="63381">MKVWMAILISILCWQSSVWAVCPAWSPARAQEEIFRLQQQIKQWDDDYWKEGKSEVEDGVYDQLSARLTQWQRCFVSEPRDVMMPPLNGAVMHPVAHTGVRKMADKNALSLWMRERSDLWVQPKVDGVAVTLVYRDGKLNKAISRGNGLKGEDWTQKVSLISAVPQTVSGPLANSTLQGEIFLQREGHIQQQMGGINARAKVAGLMMRQDDSDTLNSLGVFVWAWPDGPQLMTDRLKELATAGFTLTQRYTRAVKNADEVARVRNEWWKAKLPFVTDGVVVRGAKEPESRHWLPGQAEWLVAWKYQPVAQVAKVKAIQFAVGKSGKISVVASLAPVMLDDKKVQRVNIGSVRRWQEWDIAPGDQILVSLAGQGIPRIDDVVWRGAERTKPTPPENRFNSLTCYFASDVCQEQFISRLVWLGSKQVLGLDGIGEAGWRALHQTHRFEHIFSWLLLTPEQLQNTPGIAKSKSAQLWHRFNLARKQPFTRWVMAMGIPLTRAALNASDERSWSQLLFSTEQFWQQLPGTGSGRARQVIEWKENAQIKKLGSWLAAQQITGFEP</sequence>
<reference key="1">
    <citation type="journal article" date="2011" name="Proc. Natl. Acad. Sci. U.S.A.">
        <title>Genomic anatomy of Escherichia coli O157:H7 outbreaks.</title>
        <authorList>
            <person name="Eppinger M."/>
            <person name="Mammel M.K."/>
            <person name="Leclerc J.E."/>
            <person name="Ravel J."/>
            <person name="Cebula T.A."/>
        </authorList>
    </citation>
    <scope>NUCLEOTIDE SEQUENCE [LARGE SCALE GENOMIC DNA]</scope>
    <source>
        <strain>EC4115 / EHEC</strain>
    </source>
</reference>
<keyword id="KW-0227">DNA damage</keyword>
<keyword id="KW-0234">DNA repair</keyword>
<keyword id="KW-0235">DNA replication</keyword>
<keyword id="KW-0436">Ligase</keyword>
<keyword id="KW-0520">NAD</keyword>
<comment type="function">
    <text evidence="1">Catalyzes the formation of phosphodiester linkages between 5'-phosphoryl and 3'-hydroxyl groups in double-stranded DNA using NAD as a coenzyme and as the energy source for the reaction.</text>
</comment>
<comment type="catalytic activity">
    <reaction evidence="1">
        <text>NAD(+) + (deoxyribonucleotide)n-3'-hydroxyl + 5'-phospho-(deoxyribonucleotide)m = (deoxyribonucleotide)n+m + AMP + beta-nicotinamide D-nucleotide.</text>
        <dbReference type="EC" id="6.5.1.2"/>
    </reaction>
</comment>
<comment type="similarity">
    <text evidence="1">Belongs to the NAD-dependent DNA ligase family. LigB subfamily.</text>
</comment>
<comment type="sequence caution" evidence="2">
    <conflict type="erroneous initiation">
        <sequence resource="EMBL-CDS" id="ACI36824"/>
    </conflict>
</comment>
<protein>
    <recommendedName>
        <fullName evidence="1">DNA ligase B</fullName>
        <ecNumber evidence="1">6.5.1.2</ecNumber>
    </recommendedName>
    <alternativeName>
        <fullName evidence="1">Polydeoxyribonucleotide synthase [NAD(+)] B</fullName>
    </alternativeName>
</protein>
<proteinExistence type="inferred from homology"/>
<evidence type="ECO:0000255" key="1">
    <source>
        <dbReference type="HAMAP-Rule" id="MF_01587"/>
    </source>
</evidence>
<evidence type="ECO:0000305" key="2"/>
<gene>
    <name evidence="1" type="primary">ligB</name>
    <name type="ordered locus">ECH74115_5017</name>
</gene>
<accession>B5YWE6</accession>
<dbReference type="EC" id="6.5.1.2" evidence="1"/>
<dbReference type="EMBL" id="CP001164">
    <property type="protein sequence ID" value="ACI36824.1"/>
    <property type="status" value="ALT_INIT"/>
    <property type="molecule type" value="Genomic_DNA"/>
</dbReference>
<dbReference type="RefSeq" id="WP_001303719.1">
    <property type="nucleotide sequence ID" value="NC_011353.1"/>
</dbReference>
<dbReference type="SMR" id="B5YWE6"/>
<dbReference type="KEGG" id="ecf:ECH74115_5017"/>
<dbReference type="HOGENOM" id="CLU_489786_0_0_6"/>
<dbReference type="GO" id="GO:0003911">
    <property type="term" value="F:DNA ligase (NAD+) activity"/>
    <property type="evidence" value="ECO:0007669"/>
    <property type="project" value="UniProtKB-UniRule"/>
</dbReference>
<dbReference type="GO" id="GO:0006281">
    <property type="term" value="P:DNA repair"/>
    <property type="evidence" value="ECO:0007669"/>
    <property type="project" value="UniProtKB-KW"/>
</dbReference>
<dbReference type="GO" id="GO:0006260">
    <property type="term" value="P:DNA replication"/>
    <property type="evidence" value="ECO:0007669"/>
    <property type="project" value="UniProtKB-KW"/>
</dbReference>
<dbReference type="FunFam" id="1.10.287.610:FF:000003">
    <property type="entry name" value="DNA ligase B"/>
    <property type="match status" value="1"/>
</dbReference>
<dbReference type="FunFam" id="2.40.50.140:FF:000139">
    <property type="entry name" value="DNA ligase B"/>
    <property type="match status" value="1"/>
</dbReference>
<dbReference type="FunFam" id="3.30.470.30:FF:000007">
    <property type="entry name" value="DNA ligase B"/>
    <property type="match status" value="1"/>
</dbReference>
<dbReference type="Gene3D" id="3.30.470.30">
    <property type="entry name" value="DNA ligase/mRNA capping enzyme"/>
    <property type="match status" value="1"/>
</dbReference>
<dbReference type="Gene3D" id="1.10.287.610">
    <property type="entry name" value="Helix hairpin bin"/>
    <property type="match status" value="1"/>
</dbReference>
<dbReference type="Gene3D" id="2.40.50.140">
    <property type="entry name" value="Nucleic acid-binding proteins"/>
    <property type="match status" value="1"/>
</dbReference>
<dbReference type="HAMAP" id="MF_01587">
    <property type="entry name" value="DNA_ligase_B"/>
    <property type="match status" value="1"/>
</dbReference>
<dbReference type="InterPro" id="IPR018239">
    <property type="entry name" value="DNA_ligase_AS"/>
</dbReference>
<dbReference type="InterPro" id="IPR020923">
    <property type="entry name" value="DNA_ligase_B"/>
</dbReference>
<dbReference type="InterPro" id="IPR033136">
    <property type="entry name" value="DNA_ligase_CS"/>
</dbReference>
<dbReference type="InterPro" id="IPR013839">
    <property type="entry name" value="DNAligase_adenylation"/>
</dbReference>
<dbReference type="InterPro" id="IPR013840">
    <property type="entry name" value="DNAligase_N"/>
</dbReference>
<dbReference type="InterPro" id="IPR012340">
    <property type="entry name" value="NA-bd_OB-fold"/>
</dbReference>
<dbReference type="InterPro" id="IPR050326">
    <property type="entry name" value="NAD_dep_DNA_ligaseB"/>
</dbReference>
<dbReference type="InterPro" id="IPR004150">
    <property type="entry name" value="NAD_DNA_ligase_OB"/>
</dbReference>
<dbReference type="InterPro" id="IPR010994">
    <property type="entry name" value="RuvA_2-like"/>
</dbReference>
<dbReference type="NCBIfam" id="NF005987">
    <property type="entry name" value="PRK08097.1"/>
    <property type="match status" value="1"/>
</dbReference>
<dbReference type="PANTHER" id="PTHR47810">
    <property type="entry name" value="DNA LIGASE"/>
    <property type="match status" value="1"/>
</dbReference>
<dbReference type="PANTHER" id="PTHR47810:SF1">
    <property type="entry name" value="DNA LIGASE B"/>
    <property type="match status" value="1"/>
</dbReference>
<dbReference type="Pfam" id="PF01653">
    <property type="entry name" value="DNA_ligase_aden"/>
    <property type="match status" value="1"/>
</dbReference>
<dbReference type="Pfam" id="PF03120">
    <property type="entry name" value="DNA_ligase_OB"/>
    <property type="match status" value="1"/>
</dbReference>
<dbReference type="SMART" id="SM00532">
    <property type="entry name" value="LIGANc"/>
    <property type="match status" value="1"/>
</dbReference>
<dbReference type="SUPFAM" id="SSF56091">
    <property type="entry name" value="DNA ligase/mRNA capping enzyme, catalytic domain"/>
    <property type="match status" value="1"/>
</dbReference>
<dbReference type="SUPFAM" id="SSF50249">
    <property type="entry name" value="Nucleic acid-binding proteins"/>
    <property type="match status" value="1"/>
</dbReference>
<dbReference type="SUPFAM" id="SSF47781">
    <property type="entry name" value="RuvA domain 2-like"/>
    <property type="match status" value="1"/>
</dbReference>
<dbReference type="PROSITE" id="PS01055">
    <property type="entry name" value="DNA_LIGASE_N1"/>
    <property type="match status" value="1"/>
</dbReference>
<dbReference type="PROSITE" id="PS01056">
    <property type="entry name" value="DNA_LIGASE_N2"/>
    <property type="match status" value="1"/>
</dbReference>
<feature type="chain" id="PRO_0000381948" description="DNA ligase B">
    <location>
        <begin position="1"/>
        <end position="560"/>
    </location>
</feature>
<feature type="active site" description="N6-AMP-lysine intermediate" evidence="1">
    <location>
        <position position="124"/>
    </location>
</feature>
<name>LIGB_ECO5E</name>